<evidence type="ECO:0000255" key="1">
    <source>
        <dbReference type="HAMAP-Rule" id="MF_00113"/>
    </source>
</evidence>
<feature type="chain" id="PRO_1000076015" description="S-adenosylmethionine:tRNA ribosyltransferase-isomerase">
    <location>
        <begin position="1"/>
        <end position="365"/>
    </location>
</feature>
<name>QUEA_RICRO</name>
<keyword id="KW-0963">Cytoplasm</keyword>
<keyword id="KW-0671">Queuosine biosynthesis</keyword>
<keyword id="KW-0949">S-adenosyl-L-methionine</keyword>
<keyword id="KW-0808">Transferase</keyword>
<comment type="function">
    <text evidence="1">Transfers and isomerizes the ribose moiety from AdoMet to the 7-aminomethyl group of 7-deazaguanine (preQ1-tRNA) to give epoxyqueuosine (oQ-tRNA).</text>
</comment>
<comment type="catalytic activity">
    <reaction evidence="1">
        <text>7-aminomethyl-7-carbaguanosine(34) in tRNA + S-adenosyl-L-methionine = epoxyqueuosine(34) in tRNA + adenine + L-methionine + 2 H(+)</text>
        <dbReference type="Rhea" id="RHEA:32155"/>
        <dbReference type="Rhea" id="RHEA-COMP:10342"/>
        <dbReference type="Rhea" id="RHEA-COMP:18582"/>
        <dbReference type="ChEBI" id="CHEBI:15378"/>
        <dbReference type="ChEBI" id="CHEBI:16708"/>
        <dbReference type="ChEBI" id="CHEBI:57844"/>
        <dbReference type="ChEBI" id="CHEBI:59789"/>
        <dbReference type="ChEBI" id="CHEBI:82833"/>
        <dbReference type="ChEBI" id="CHEBI:194443"/>
        <dbReference type="EC" id="2.4.99.17"/>
    </reaction>
</comment>
<comment type="pathway">
    <text evidence="1">tRNA modification; tRNA-queuosine biosynthesis.</text>
</comment>
<comment type="subunit">
    <text evidence="1">Monomer.</text>
</comment>
<comment type="subcellular location">
    <subcellularLocation>
        <location evidence="1">Cytoplasm</location>
    </subcellularLocation>
</comment>
<comment type="similarity">
    <text evidence="1">Belongs to the QueA family.</text>
</comment>
<reference key="1">
    <citation type="journal article" date="2008" name="Infect. Immun.">
        <title>Genomic comparison of virulent Rickettsia rickettsii Sheila Smith and avirulent Rickettsia rickettsii Iowa.</title>
        <authorList>
            <person name="Ellison D.W."/>
            <person name="Clark T.R."/>
            <person name="Sturdevant D.E."/>
            <person name="Virtaneva K."/>
            <person name="Porcella S.F."/>
            <person name="Hackstadt T."/>
        </authorList>
    </citation>
    <scope>NUCLEOTIDE SEQUENCE [LARGE SCALE GENOMIC DNA]</scope>
    <source>
        <strain>Iowa</strain>
    </source>
</reference>
<sequence length="365" mass="41400">MKLSDFDFDLPSELIAQYPSSERDNSDLLIAVTPPIKTKFYNIIDYLKEGDLLVFNNSKVIKAQLNLGKNITINLNQKLSDDSWSAFAKPARKLHVNDEFYFDNHKVIITEKLAMGEIKVKFKLNDISVFEFLNKYGEMPLPVYIRRSHSLCHPVATTTGSKTYLNNDWIPWSNHGMTNTQNDNDRYQTVYSQIEGSVAAPTAGLHFTKDILDKLKAEGIQATFLTLHVGAGTFLPVKTENIHEHKMHTEYCSITPDTAEIINKAKQEGKRIIAVGTTTLRTLESSCNNGIVKAGSFKTDIFITPGFKFQTADMLLTNFHFPKSTLFMLICAFAGFKEMHELYKYAIKEAMRFFSYGDATLLCRK</sequence>
<accession>B0BWL5</accession>
<protein>
    <recommendedName>
        <fullName evidence="1">S-adenosylmethionine:tRNA ribosyltransferase-isomerase</fullName>
        <ecNumber evidence="1">2.4.99.17</ecNumber>
    </recommendedName>
    <alternativeName>
        <fullName evidence="1">Queuosine biosynthesis protein QueA</fullName>
    </alternativeName>
</protein>
<proteinExistence type="inferred from homology"/>
<gene>
    <name evidence="1" type="primary">queA</name>
    <name type="ordered locus">RrIowa_0343</name>
</gene>
<dbReference type="EC" id="2.4.99.17" evidence="1"/>
<dbReference type="EMBL" id="CP000766">
    <property type="protein sequence ID" value="ABY72241.1"/>
    <property type="molecule type" value="Genomic_DNA"/>
</dbReference>
<dbReference type="RefSeq" id="WP_012150499.1">
    <property type="nucleotide sequence ID" value="NC_010263.3"/>
</dbReference>
<dbReference type="SMR" id="B0BWL5"/>
<dbReference type="GeneID" id="79937063"/>
<dbReference type="KEGG" id="rrj:RrIowa_0343"/>
<dbReference type="eggNOG" id="COG0809">
    <property type="taxonomic scope" value="Bacteria"/>
</dbReference>
<dbReference type="HOGENOM" id="CLU_039110_1_0_5"/>
<dbReference type="UniPathway" id="UPA00392"/>
<dbReference type="Proteomes" id="UP000000796">
    <property type="component" value="Chromosome"/>
</dbReference>
<dbReference type="GO" id="GO:0005737">
    <property type="term" value="C:cytoplasm"/>
    <property type="evidence" value="ECO:0007669"/>
    <property type="project" value="UniProtKB-SubCell"/>
</dbReference>
<dbReference type="GO" id="GO:0051075">
    <property type="term" value="F:S-adenosylmethionine:tRNA ribosyltransferase-isomerase activity"/>
    <property type="evidence" value="ECO:0007669"/>
    <property type="project" value="UniProtKB-EC"/>
</dbReference>
<dbReference type="GO" id="GO:0008616">
    <property type="term" value="P:queuosine biosynthetic process"/>
    <property type="evidence" value="ECO:0007669"/>
    <property type="project" value="UniProtKB-UniRule"/>
</dbReference>
<dbReference type="GO" id="GO:0002099">
    <property type="term" value="P:tRNA wobble guanine modification"/>
    <property type="evidence" value="ECO:0007669"/>
    <property type="project" value="TreeGrafter"/>
</dbReference>
<dbReference type="Gene3D" id="2.40.10.240">
    <property type="entry name" value="QueA-like"/>
    <property type="match status" value="1"/>
</dbReference>
<dbReference type="Gene3D" id="3.40.1780.10">
    <property type="entry name" value="QueA-like"/>
    <property type="match status" value="1"/>
</dbReference>
<dbReference type="HAMAP" id="MF_00113">
    <property type="entry name" value="QueA"/>
    <property type="match status" value="1"/>
</dbReference>
<dbReference type="InterPro" id="IPR003699">
    <property type="entry name" value="QueA"/>
</dbReference>
<dbReference type="InterPro" id="IPR042118">
    <property type="entry name" value="QueA_dom1"/>
</dbReference>
<dbReference type="InterPro" id="IPR042119">
    <property type="entry name" value="QueA_dom2"/>
</dbReference>
<dbReference type="InterPro" id="IPR036100">
    <property type="entry name" value="QueA_sf"/>
</dbReference>
<dbReference type="NCBIfam" id="NF002398">
    <property type="entry name" value="PRK01424.1"/>
    <property type="match status" value="1"/>
</dbReference>
<dbReference type="PANTHER" id="PTHR30307">
    <property type="entry name" value="S-ADENOSYLMETHIONINE:TRNA RIBOSYLTRANSFERASE-ISOMERASE"/>
    <property type="match status" value="1"/>
</dbReference>
<dbReference type="PANTHER" id="PTHR30307:SF0">
    <property type="entry name" value="S-ADENOSYLMETHIONINE:TRNA RIBOSYLTRANSFERASE-ISOMERASE"/>
    <property type="match status" value="1"/>
</dbReference>
<dbReference type="Pfam" id="PF02547">
    <property type="entry name" value="Queuosine_synth"/>
    <property type="match status" value="1"/>
</dbReference>
<dbReference type="SUPFAM" id="SSF111337">
    <property type="entry name" value="QueA-like"/>
    <property type="match status" value="1"/>
</dbReference>
<organism>
    <name type="scientific">Rickettsia rickettsii (strain Iowa)</name>
    <dbReference type="NCBI Taxonomy" id="452659"/>
    <lineage>
        <taxon>Bacteria</taxon>
        <taxon>Pseudomonadati</taxon>
        <taxon>Pseudomonadota</taxon>
        <taxon>Alphaproteobacteria</taxon>
        <taxon>Rickettsiales</taxon>
        <taxon>Rickettsiaceae</taxon>
        <taxon>Rickettsieae</taxon>
        <taxon>Rickettsia</taxon>
        <taxon>spotted fever group</taxon>
    </lineage>
</organism>